<protein>
    <recommendedName>
        <fullName>Cell wall acid trehalase ATC1</fullName>
        <ecNumber>3.2.1.28</ecNumber>
    </recommendedName>
    <alternativeName>
        <fullName>Alpha,alpha-trehalase</fullName>
    </alternativeName>
    <alternativeName>
        <fullName>Alpha,alpha-trehalose glucohydrolase</fullName>
    </alternativeName>
</protein>
<gene>
    <name type="primary">ATC1</name>
    <name type="synonym">ATH1</name>
    <name type="ordered locus">CAALFM_C106940CA</name>
    <name type="ORF">CaO19.13595</name>
    <name type="ORF">CaO19.6214</name>
</gene>
<accession>Q5AAU5</accession>
<accession>A0A1D8PDZ0</accession>
<dbReference type="EC" id="3.2.1.28"/>
<dbReference type="EMBL" id="CP017623">
    <property type="protein sequence ID" value="AOW26348.1"/>
    <property type="molecule type" value="Genomic_DNA"/>
</dbReference>
<dbReference type="RefSeq" id="XP_718804.2">
    <property type="nucleotide sequence ID" value="XM_713711.2"/>
</dbReference>
<dbReference type="SMR" id="Q5AAU5"/>
<dbReference type="FunCoup" id="Q5AAU5">
    <property type="interactions" value="71"/>
</dbReference>
<dbReference type="STRING" id="237561.Q5AAU5"/>
<dbReference type="GlyCosmos" id="Q5AAU5">
    <property type="glycosylation" value="21 sites, No reported glycans"/>
</dbReference>
<dbReference type="EnsemblFungi" id="C1_06940C_A-T">
    <property type="protein sequence ID" value="C1_06940C_A-T-p1"/>
    <property type="gene ID" value="C1_06940C_A"/>
</dbReference>
<dbReference type="GeneID" id="3639570"/>
<dbReference type="KEGG" id="cal:CAALFM_C106940CA"/>
<dbReference type="CGD" id="CAL0000186706">
    <property type="gene designation" value="ATC1"/>
</dbReference>
<dbReference type="VEuPathDB" id="FungiDB:C1_06940C_A"/>
<dbReference type="eggNOG" id="KOG4125">
    <property type="taxonomic scope" value="Eukaryota"/>
</dbReference>
<dbReference type="HOGENOM" id="CLU_006285_4_0_1"/>
<dbReference type="InParanoid" id="Q5AAU5"/>
<dbReference type="OrthoDB" id="200349at2759"/>
<dbReference type="BRENDA" id="3.2.1.28">
    <property type="organism ID" value="1096"/>
</dbReference>
<dbReference type="PRO" id="PR:Q5AAU5"/>
<dbReference type="Proteomes" id="UP000000559">
    <property type="component" value="Chromosome 1"/>
</dbReference>
<dbReference type="GO" id="GO:0030287">
    <property type="term" value="C:cell wall-bounded periplasmic space"/>
    <property type="evidence" value="ECO:0007669"/>
    <property type="project" value="EnsemblFungi"/>
</dbReference>
<dbReference type="GO" id="GO:1903561">
    <property type="term" value="C:extracellular vesicle"/>
    <property type="evidence" value="ECO:0000314"/>
    <property type="project" value="CGD"/>
</dbReference>
<dbReference type="GO" id="GO:0009277">
    <property type="term" value="C:fungal-type cell wall"/>
    <property type="evidence" value="ECO:0000314"/>
    <property type="project" value="CGD"/>
</dbReference>
<dbReference type="GO" id="GO:0000328">
    <property type="term" value="C:fungal-type vacuole lumen"/>
    <property type="evidence" value="ECO:0007669"/>
    <property type="project" value="EnsemblFungi"/>
</dbReference>
<dbReference type="GO" id="GO:0016020">
    <property type="term" value="C:membrane"/>
    <property type="evidence" value="ECO:0007669"/>
    <property type="project" value="EnsemblFungi"/>
</dbReference>
<dbReference type="GO" id="GO:0004555">
    <property type="term" value="F:alpha,alpha-trehalase activity"/>
    <property type="evidence" value="ECO:0000314"/>
    <property type="project" value="CGD"/>
</dbReference>
<dbReference type="GO" id="GO:0030246">
    <property type="term" value="F:carbohydrate binding"/>
    <property type="evidence" value="ECO:0007669"/>
    <property type="project" value="InterPro"/>
</dbReference>
<dbReference type="GO" id="GO:0015976">
    <property type="term" value="P:carbon utilization"/>
    <property type="evidence" value="ECO:0007669"/>
    <property type="project" value="EnsemblFungi"/>
</dbReference>
<dbReference type="GO" id="GO:0005993">
    <property type="term" value="P:trehalose catabolic process"/>
    <property type="evidence" value="ECO:0000314"/>
    <property type="project" value="CGD"/>
</dbReference>
<dbReference type="GO" id="GO:0015771">
    <property type="term" value="P:trehalose transport"/>
    <property type="evidence" value="ECO:0007669"/>
    <property type="project" value="EnsemblFungi"/>
</dbReference>
<dbReference type="FunFam" id="2.70.98.40:FF:000003">
    <property type="entry name" value="Acid trehalase"/>
    <property type="match status" value="1"/>
</dbReference>
<dbReference type="FunFam" id="1.50.10.10:FF:000032">
    <property type="entry name" value="Vacuolar acid trehalase"/>
    <property type="match status" value="1"/>
</dbReference>
<dbReference type="Gene3D" id="1.50.10.10">
    <property type="match status" value="1"/>
</dbReference>
<dbReference type="Gene3D" id="2.70.98.40">
    <property type="entry name" value="Glycoside hydrolase, family 65, N-terminal domain"/>
    <property type="match status" value="1"/>
</dbReference>
<dbReference type="InterPro" id="IPR008928">
    <property type="entry name" value="6-hairpin_glycosidase_sf"/>
</dbReference>
<dbReference type="InterPro" id="IPR012341">
    <property type="entry name" value="6hp_glycosidase-like_sf"/>
</dbReference>
<dbReference type="InterPro" id="IPR011013">
    <property type="entry name" value="Gal_mutarotase_sf_dom"/>
</dbReference>
<dbReference type="InterPro" id="IPR005195">
    <property type="entry name" value="Glyco_hydro_65_M"/>
</dbReference>
<dbReference type="InterPro" id="IPR005196">
    <property type="entry name" value="Glyco_hydro_65_N"/>
</dbReference>
<dbReference type="InterPro" id="IPR037018">
    <property type="entry name" value="Glyco_hydro_65_N_sf"/>
</dbReference>
<dbReference type="PANTHER" id="PTHR11051">
    <property type="entry name" value="GLYCOSYL HYDROLASE-RELATED"/>
    <property type="match status" value="1"/>
</dbReference>
<dbReference type="PANTHER" id="PTHR11051:SF8">
    <property type="entry name" value="PROTEIN-GLUCOSYLGALACTOSYLHYDROXYLYSINE GLUCOSIDASE"/>
    <property type="match status" value="1"/>
</dbReference>
<dbReference type="Pfam" id="PF03632">
    <property type="entry name" value="Glyco_hydro_65m"/>
    <property type="match status" value="1"/>
</dbReference>
<dbReference type="Pfam" id="PF03636">
    <property type="entry name" value="Glyco_hydro_65N"/>
    <property type="match status" value="1"/>
</dbReference>
<dbReference type="SUPFAM" id="SSF74650">
    <property type="entry name" value="Galactose mutarotase-like"/>
    <property type="match status" value="1"/>
</dbReference>
<dbReference type="SUPFAM" id="SSF48208">
    <property type="entry name" value="Six-hairpin glycosidases"/>
    <property type="match status" value="1"/>
</dbReference>
<evidence type="ECO:0000250" key="1">
    <source>
        <dbReference type="UniProtKB" id="D6XZ22"/>
    </source>
</evidence>
<evidence type="ECO:0000255" key="2"/>
<evidence type="ECO:0000269" key="3">
    <source>
    </source>
</evidence>
<evidence type="ECO:0000269" key="4">
    <source>
    </source>
</evidence>
<evidence type="ECO:0000269" key="5">
    <source>
    </source>
</evidence>
<evidence type="ECO:0000269" key="6">
    <source>
    </source>
</evidence>
<evidence type="ECO:0000269" key="7">
    <source>
    </source>
</evidence>
<evidence type="ECO:0000269" key="8">
    <source>
    </source>
</evidence>
<evidence type="ECO:0000305" key="9"/>
<sequence length="1078" mass="120236">MAANSSFFLADNCAPHNQSFIQFCIHAASKKKGRIALMCLANLFLLFSFHLLYARFCSGFPYVVPSTARSTNQIFHTNLEQLVNSPENKQIFSQLKFSDQAFYDPHDNVVGTTEFPVFNQYQRQPYVANGYIGSRIPNLGQGFTYDQLTNSSTANDDDLLNGWPLFNKRYSGAFVAGFYDLQKNTTGTNFAELLENGYESVIAAVPQWTALSLSVEILGKKYTLDPSLEHEAIGDITNYVQNMSLSDGIVTTQFTWLNTFDVKYEILAHRENINLGLVNMQVYNPGNESVQVIVSDVLDFNSSQRCQLNQISHDKNGIYVTFHPQGLSYIDGAIYSTLSANGQITREQTNETVFQNVELTIEPHSCVQVAKYVGIATTDLDPDSFKTADDVLKFARKVSQNKKHGDATQLVNSHRSAWSKIIQDAPLVTFPSDSLLNLGARASIFHLLANTRPNAEGVTGALGVSGLSSDSYGGMVFWDTDLWMLNGILPFAPDHIKSFINYRVHLHQQAIDNVPRGYQGAVYPWTSGRFGNCTGTGPCLDYEYHINMAVAMASWQLYISGAADDTFLESVAYPIINDAASFLAEYVVHYNDTLGKYTTKNLTDPDEFANHVDNGAYTNTGIVLVMRWAQIAGSILGKQVPKIYHDIETAMFLPTAENTQNITLEYSGMNSSVGIKQADVIMMTYPLENELIDQDQAYINMEFYSMKQVGYGPAMTFPIFSIVASNLAFTGCASQSYLHKAIQPFLRGPFAQFAEQNNDDYLTNGGTHPAFPFLTAHGGFLQAILQGLTGMRFDYTFENNKLQRLLKLDPIALPCLGEGVRFDSIKYDNHTLSMAINETHFTIKNKGKTTPNARNYVTILLAERNAMHGKYTINDEDEQSFPLFETSESFPDSISECNKAGFFNITEGAYGDVSISINDGDNTTSWQAKYNDTTGKVLVDLKSFRNISSGTFIWGDKPPKRVKVSKYSGSSFTAVTDFFAQVDFGNELFNEYKYANPEGKLHNQSDVFEEVYSGDVKISAPFDPEEYFQVWVPTRHNITEVAVNLQTRFLLIEVDEIHNTEAIDGDYGGAKLAEVVFY</sequence>
<name>ATC1_CANAL</name>
<keyword id="KW-0134">Cell wall</keyword>
<keyword id="KW-0325">Glycoprotein</keyword>
<keyword id="KW-0326">Glycosidase</keyword>
<keyword id="KW-0378">Hydrolase</keyword>
<keyword id="KW-1185">Reference proteome</keyword>
<keyword id="KW-0964">Secreted</keyword>
<keyword id="KW-0732">Signal</keyword>
<keyword id="KW-0843">Virulence</keyword>
<proteinExistence type="evidence at protein level"/>
<comment type="function">
    <text evidence="3 4 5 6 8">Cell wall acid trehalase that catalyzes hydrolysis of the disaccharide trehalose and required for growth on trehalose as carbon source. Plays a role in dimorphic conversion and virulence.</text>
</comment>
<comment type="catalytic activity">
    <reaction evidence="4 6">
        <text>alpha,alpha-trehalose + H2O = alpha-D-glucose + beta-D-glucose</text>
        <dbReference type="Rhea" id="RHEA:32675"/>
        <dbReference type="ChEBI" id="CHEBI:15377"/>
        <dbReference type="ChEBI" id="CHEBI:15903"/>
        <dbReference type="ChEBI" id="CHEBI:16551"/>
        <dbReference type="ChEBI" id="CHEBI:17925"/>
        <dbReference type="EC" id="3.2.1.28"/>
    </reaction>
</comment>
<comment type="subcellular location">
    <subcellularLocation>
        <location evidence="3 4 8">Secreted</location>
        <location evidence="3 4 8">Cell wall</location>
    </subcellularLocation>
</comment>
<comment type="induction">
    <text evidence="6 7">Expression is repressed by glucose and by HAP43.</text>
</comment>
<comment type="disruption phenotype">
    <text evidence="4 5">Lacks acid trehalase activity and decreases hypha formation and infectivity.</text>
</comment>
<comment type="similarity">
    <text evidence="9">Belongs to the glycosyl hydrolase 65 family.</text>
</comment>
<organism>
    <name type="scientific">Candida albicans (strain SC5314 / ATCC MYA-2876)</name>
    <name type="common">Yeast</name>
    <dbReference type="NCBI Taxonomy" id="237561"/>
    <lineage>
        <taxon>Eukaryota</taxon>
        <taxon>Fungi</taxon>
        <taxon>Dikarya</taxon>
        <taxon>Ascomycota</taxon>
        <taxon>Saccharomycotina</taxon>
        <taxon>Pichiomycetes</taxon>
        <taxon>Debaryomycetaceae</taxon>
        <taxon>Candida/Lodderomyces clade</taxon>
        <taxon>Candida</taxon>
    </lineage>
</organism>
<feature type="signal peptide" evidence="2">
    <location>
        <begin position="1"/>
        <end position="54"/>
    </location>
</feature>
<feature type="chain" id="PRO_0000428633" description="Cell wall acid trehalase ATC1">
    <location>
        <begin position="55"/>
        <end position="1078"/>
    </location>
</feature>
<feature type="active site" description="Proton donor" evidence="1">
    <location>
        <position position="607"/>
    </location>
</feature>
<feature type="binding site" evidence="1">
    <location>
        <begin position="478"/>
        <end position="479"/>
    </location>
    <ligand>
        <name>substrate</name>
    </ligand>
</feature>
<feature type="binding site" evidence="1">
    <location>
        <begin position="676"/>
        <end position="677"/>
    </location>
    <ligand>
        <name>substrate</name>
    </ligand>
</feature>
<feature type="glycosylation site" description="N-linked (GlcNAc...) asparagine" evidence="2">
    <location>
        <position position="4"/>
    </location>
</feature>
<feature type="glycosylation site" description="N-linked (GlcNAc...) asparagine" evidence="2">
    <location>
        <position position="17"/>
    </location>
</feature>
<feature type="glycosylation site" description="N-linked (GlcNAc...) asparagine" evidence="2">
    <location>
        <position position="150"/>
    </location>
</feature>
<feature type="glycosylation site" description="N-linked (GlcNAc...) asparagine" evidence="2">
    <location>
        <position position="184"/>
    </location>
</feature>
<feature type="glycosylation site" description="N-linked (GlcNAc...) asparagine" evidence="2">
    <location>
        <position position="242"/>
    </location>
</feature>
<feature type="glycosylation site" description="N-linked (GlcNAc...) asparagine" evidence="2">
    <location>
        <position position="287"/>
    </location>
</feature>
<feature type="glycosylation site" description="N-linked (GlcNAc...) asparagine" evidence="2">
    <location>
        <position position="301"/>
    </location>
</feature>
<feature type="glycosylation site" description="N-linked (GlcNAc...) asparagine" evidence="2">
    <location>
        <position position="350"/>
    </location>
</feature>
<feature type="glycosylation site" description="N-linked (GlcNAc...) asparagine" evidence="2">
    <location>
        <position position="532"/>
    </location>
</feature>
<feature type="glycosylation site" description="N-linked (GlcNAc...) asparagine" evidence="2">
    <location>
        <position position="591"/>
    </location>
</feature>
<feature type="glycosylation site" description="N-linked (GlcNAc...) asparagine" evidence="2">
    <location>
        <position position="601"/>
    </location>
</feature>
<feature type="glycosylation site" description="N-linked (GlcNAc...) asparagine" evidence="2">
    <location>
        <position position="661"/>
    </location>
</feature>
<feature type="glycosylation site" description="N-linked (GlcNAc...) asparagine" evidence="2">
    <location>
        <position position="670"/>
    </location>
</feature>
<feature type="glycosylation site" description="N-linked (GlcNAc...) asparagine" evidence="2">
    <location>
        <position position="829"/>
    </location>
</feature>
<feature type="glycosylation site" description="N-linked (GlcNAc...) asparagine" evidence="2">
    <location>
        <position position="837"/>
    </location>
</feature>
<feature type="glycosylation site" description="N-linked (GlcNAc...) asparagine" evidence="2">
    <location>
        <position position="904"/>
    </location>
</feature>
<feature type="glycosylation site" description="N-linked (GlcNAc...) asparagine" evidence="2">
    <location>
        <position position="922"/>
    </location>
</feature>
<feature type="glycosylation site" description="N-linked (GlcNAc...) asparagine" evidence="2">
    <location>
        <position position="931"/>
    </location>
</feature>
<feature type="glycosylation site" description="N-linked (GlcNAc...) asparagine" evidence="2">
    <location>
        <position position="946"/>
    </location>
</feature>
<feature type="glycosylation site" description="N-linked (GlcNAc...) asparagine" evidence="2">
    <location>
        <position position="1003"/>
    </location>
</feature>
<feature type="glycosylation site" description="N-linked (GlcNAc...) asparagine" evidence="2">
    <location>
        <position position="1037"/>
    </location>
</feature>
<reference key="1">
    <citation type="journal article" date="2004" name="Proc. Natl. Acad. Sci. U.S.A.">
        <title>The diploid genome sequence of Candida albicans.</title>
        <authorList>
            <person name="Jones T."/>
            <person name="Federspiel N.A."/>
            <person name="Chibana H."/>
            <person name="Dungan J."/>
            <person name="Kalman S."/>
            <person name="Magee B.B."/>
            <person name="Newport G."/>
            <person name="Thorstenson Y.R."/>
            <person name="Agabian N."/>
            <person name="Magee P.T."/>
            <person name="Davis R.W."/>
            <person name="Scherer S."/>
        </authorList>
    </citation>
    <scope>NUCLEOTIDE SEQUENCE [LARGE SCALE GENOMIC DNA]</scope>
    <source>
        <strain>SC5314 / ATCC MYA-2876</strain>
    </source>
</reference>
<reference key="2">
    <citation type="journal article" date="2007" name="Genome Biol.">
        <title>Assembly of the Candida albicans genome into sixteen supercontigs aligned on the eight chromosomes.</title>
        <authorList>
            <person name="van het Hoog M."/>
            <person name="Rast T.J."/>
            <person name="Martchenko M."/>
            <person name="Grindle S."/>
            <person name="Dignard D."/>
            <person name="Hogues H."/>
            <person name="Cuomo C."/>
            <person name="Berriman M."/>
            <person name="Scherer S."/>
            <person name="Magee B.B."/>
            <person name="Whiteway M."/>
            <person name="Chibana H."/>
            <person name="Nantel A."/>
            <person name="Magee P.T."/>
        </authorList>
    </citation>
    <scope>GENOME REANNOTATION</scope>
    <source>
        <strain>SC5314 / ATCC MYA-2876</strain>
    </source>
</reference>
<reference key="3">
    <citation type="journal article" date="2013" name="Genome Biol.">
        <title>Assembly of a phased diploid Candida albicans genome facilitates allele-specific measurements and provides a simple model for repeat and indel structure.</title>
        <authorList>
            <person name="Muzzey D."/>
            <person name="Schwartz K."/>
            <person name="Weissman J.S."/>
            <person name="Sherlock G."/>
        </authorList>
    </citation>
    <scope>NUCLEOTIDE SEQUENCE [LARGE SCALE GENOMIC DNA]</scope>
    <scope>GENOME REANNOTATION</scope>
    <source>
        <strain>SC5314 / ATCC MYA-2876</strain>
    </source>
</reference>
<reference key="4">
    <citation type="journal article" date="1975" name="Physiol. Chem. Phys.">
        <title>Trehalose and glycogen levels during the initial stages of growth of Candida albicans.</title>
        <authorList>
            <person name="Arnold W.N."/>
            <person name="McLellan M.N."/>
        </authorList>
    </citation>
    <scope>FUNCTION</scope>
    <scope>SUBCELLULAR LOCATION</scope>
</reference>
<reference key="5">
    <citation type="journal article" date="1995" name="Exp. Mycol.">
        <title>Differential extraction of N-acetylglucosaminidase and trehalase from the cell envelope of Candida albicans.</title>
        <authorList>
            <person name="Molloy C."/>
            <person name="Shepherd M.G."/>
            <person name="Sullivan P.A."/>
        </authorList>
    </citation>
    <scope>FUNCTION</scope>
    <scope>SUBCELLULAR LOCATION</scope>
</reference>
<reference key="6">
    <citation type="journal article" date="2004" name="J. Biol. Chem.">
        <title>The ATC1 gene encodes a cell wall-linked acid trehalase required for growth on trehalose in Candida albicans.</title>
        <authorList>
            <person name="Pedreno Y."/>
            <person name="Maicas S."/>
            <person name="Arguelles J.C."/>
            <person name="Sentandreu R."/>
            <person name="Valentin E."/>
        </authorList>
    </citation>
    <scope>FUNCTION</scope>
    <scope>CATALYTIC ACTIVITY</scope>
    <scope>DISRUPTION PHENOTYPE</scope>
    <scope>SUBCELLULAR LOCATION</scope>
</reference>
<reference key="7">
    <citation type="journal article" date="2007" name="Microbiology">
        <title>Disruption of the Candida albicans ATC1 gene encoding a cell-linked acid trehalase decreases hypha formation and infectivity without affecting resistance to oxidative stress.</title>
        <authorList>
            <person name="Pedreno Y."/>
            <person name="Gonzalez-Parraga P."/>
            <person name="Martinez-Esparza M."/>
            <person name="Sentandreu R."/>
            <person name="Valentin E."/>
            <person name="Arguelles J.C."/>
        </authorList>
    </citation>
    <scope>FUNCTION</scope>
    <scope>DISRUPTION PHENOTYPE</scope>
</reference>
<reference key="8">
    <citation type="journal article" date="2009" name="Biochem. Biophys. Res. Commun.">
        <title>On the biochemical classification of yeast trehalases: Candida albicans contains two enzymes with mixed features of neutral and acid trehalase activities.</title>
        <authorList>
            <person name="Sanchez-Fresneda R."/>
            <person name="Gonzalez-Parraga P."/>
            <person name="Esteban O."/>
            <person name="Laforet L."/>
            <person name="Valentin E."/>
            <person name="Arguelles J.C."/>
        </authorList>
    </citation>
    <scope>FUNCTION</scope>
    <scope>CATALYTIC ACTIVITY</scope>
    <scope>INDUCTION</scope>
</reference>
<reference key="9">
    <citation type="journal article" date="2011" name="J. Biol. Chem.">
        <title>Cap2-HAP complex is a critical transcriptional regulator that has dual but contrasting roles in regulation of iron homeostasis in Candida albicans.</title>
        <authorList>
            <person name="Singh R.P."/>
            <person name="Prasad H.K."/>
            <person name="Sinha I."/>
            <person name="Agarwal N."/>
            <person name="Natarajan K."/>
        </authorList>
    </citation>
    <scope>INDUCTION</scope>
</reference>